<protein>
    <recommendedName>
        <fullName evidence="4">Delta-conotoxin SuVIA</fullName>
        <shortName evidence="4">Delta-SuVIA</shortName>
    </recommendedName>
</protein>
<comment type="function">
    <text evidence="3">This toxin activates voltage-gated sodium channels (Nav1.3/SCN3A (EC(50)=3.98 nM), Nav1.4/SCN4A (EC(50)=4.99 nM), Nav1.6/SCN8A (EC(50)=1.27 nM) and Nav1.7/SCN9A (EC(50)=2.42 nM)). It shifts the voltage-dependence of activation to more hyperpolarized potentials but has only little effect on channel inactivation. In vivo, it induces nocifensive or pain-like behaviors in mice when injected intraplantarly. This is coherent with the specific defensive role deduced from its proximal position in the venom gland.</text>
</comment>
<comment type="subcellular location">
    <subcellularLocation>
        <location evidence="3">Secreted</location>
    </subcellularLocation>
</comment>
<comment type="tissue specificity">
    <text evidence="5">Expressed by the venom duct, in the proximal part (indicative of a defensive role).</text>
</comment>
<comment type="domain">
    <text evidence="1">The cysteine framework is VI/VII (C-C-CC-C-C).</text>
</comment>
<comment type="domain">
    <text evidence="2">The presence of a 'disulfide through disulfide knot' structurally defines this protein as a knottin.</text>
</comment>
<comment type="mass spectrometry">
    <text>Monoisotopic mass.</text>
</comment>
<comment type="similarity">
    <text evidence="5">Belongs to the conotoxin O1 superfamily.</text>
</comment>
<proteinExistence type="evidence at protein level"/>
<keyword id="KW-0903">Direct protein sequencing</keyword>
<keyword id="KW-1015">Disulfide bond</keyword>
<keyword id="KW-0872">Ion channel impairing toxin</keyword>
<keyword id="KW-0960">Knottin</keyword>
<keyword id="KW-0528">Neurotoxin</keyword>
<keyword id="KW-0964">Secreted</keyword>
<keyword id="KW-0800">Toxin</keyword>
<keyword id="KW-0738">Voltage-gated sodium channel impairing toxin</keyword>
<reference key="1">
    <citation type="journal article" date="2015" name="Proc. R. Soc. B">
        <title>Delta-conotoxin SuVIA suggests an evolutionary link between ancestral predator defence and the origin of fish-hunting behaviour in carnivorous cone snails.</title>
        <authorList>
            <person name="Jin A.H."/>
            <person name="Israel M.R."/>
            <person name="Inserra M.C."/>
            <person name="Smith J.J."/>
            <person name="Lewis R.J."/>
            <person name="Alewood P.F."/>
            <person name="Vetter I."/>
            <person name="Dutertre S."/>
        </authorList>
    </citation>
    <scope>PROTEIN SEQUENCE</scope>
    <scope>MASS SPECTROMETRY</scope>
    <scope>IDENTIFICATION BY MASS SPECTROMETRY</scope>
    <scope>SUBCELLULAR LOCATION</scope>
    <source>
        <tissue>Venom</tissue>
    </source>
</reference>
<organism>
    <name type="scientific">Conus suturatus</name>
    <name type="common">Sutured cone</name>
    <dbReference type="NCBI Taxonomy" id="1519877"/>
    <lineage>
        <taxon>Eukaryota</taxon>
        <taxon>Metazoa</taxon>
        <taxon>Spiralia</taxon>
        <taxon>Lophotrochozoa</taxon>
        <taxon>Mollusca</taxon>
        <taxon>Gastropoda</taxon>
        <taxon>Caenogastropoda</taxon>
        <taxon>Neogastropoda</taxon>
        <taxon>Conoidea</taxon>
        <taxon>Conidae</taxon>
        <taxon>Conus</taxon>
        <taxon>Tesselliconus</taxon>
    </lineage>
</organism>
<accession>P0DL67</accession>
<dbReference type="SMR" id="P0DL67"/>
<dbReference type="GO" id="GO:0005576">
    <property type="term" value="C:extracellular region"/>
    <property type="evidence" value="ECO:0007669"/>
    <property type="project" value="UniProtKB-SubCell"/>
</dbReference>
<dbReference type="GO" id="GO:0017080">
    <property type="term" value="F:sodium channel regulator activity"/>
    <property type="evidence" value="ECO:0007669"/>
    <property type="project" value="UniProtKB-KW"/>
</dbReference>
<dbReference type="GO" id="GO:0090729">
    <property type="term" value="F:toxin activity"/>
    <property type="evidence" value="ECO:0007669"/>
    <property type="project" value="UniProtKB-KW"/>
</dbReference>
<evidence type="ECO:0000250" key="1">
    <source>
        <dbReference type="UniProtKB" id="P0DL66"/>
    </source>
</evidence>
<evidence type="ECO:0000250" key="2">
    <source>
        <dbReference type="UniProtKB" id="P60513"/>
    </source>
</evidence>
<evidence type="ECO:0000269" key="3">
    <source>
    </source>
</evidence>
<evidence type="ECO:0000303" key="4">
    <source>
    </source>
</evidence>
<evidence type="ECO:0000305" key="5"/>
<name>O16A_CONSC</name>
<sequence>CAGIGSFCGLPGLVDCCSDRCFIVCLP</sequence>
<feature type="peptide" id="PRO_0000439827" description="Delta-conotoxin SuVIA" evidence="3">
    <location>
        <begin position="1"/>
        <end position="27"/>
    </location>
</feature>
<feature type="disulfide bond" evidence="2">
    <location>
        <begin position="1"/>
        <end position="17"/>
    </location>
</feature>
<feature type="disulfide bond" evidence="2">
    <location>
        <begin position="8"/>
        <end position="21"/>
    </location>
</feature>
<feature type="disulfide bond" evidence="2">
    <location>
        <begin position="16"/>
        <end position="25"/>
    </location>
</feature>